<accession>Q1MQG9</accession>
<protein>
    <recommendedName>
        <fullName evidence="1">Asparagine--tRNA ligase</fullName>
        <ecNumber evidence="1">6.1.1.22</ecNumber>
    </recommendedName>
    <alternativeName>
        <fullName evidence="1">Asparaginyl-tRNA synthetase</fullName>
        <shortName evidence="1">AsnRS</shortName>
    </alternativeName>
</protein>
<comment type="catalytic activity">
    <reaction evidence="1">
        <text>tRNA(Asn) + L-asparagine + ATP = L-asparaginyl-tRNA(Asn) + AMP + diphosphate + H(+)</text>
        <dbReference type="Rhea" id="RHEA:11180"/>
        <dbReference type="Rhea" id="RHEA-COMP:9659"/>
        <dbReference type="Rhea" id="RHEA-COMP:9674"/>
        <dbReference type="ChEBI" id="CHEBI:15378"/>
        <dbReference type="ChEBI" id="CHEBI:30616"/>
        <dbReference type="ChEBI" id="CHEBI:33019"/>
        <dbReference type="ChEBI" id="CHEBI:58048"/>
        <dbReference type="ChEBI" id="CHEBI:78442"/>
        <dbReference type="ChEBI" id="CHEBI:78515"/>
        <dbReference type="ChEBI" id="CHEBI:456215"/>
        <dbReference type="EC" id="6.1.1.22"/>
    </reaction>
</comment>
<comment type="subunit">
    <text evidence="1">Homodimer.</text>
</comment>
<comment type="subcellular location">
    <subcellularLocation>
        <location evidence="1">Cytoplasm</location>
    </subcellularLocation>
</comment>
<comment type="similarity">
    <text evidence="1">Belongs to the class-II aminoacyl-tRNA synthetase family.</text>
</comment>
<dbReference type="EC" id="6.1.1.22" evidence="1"/>
<dbReference type="EMBL" id="AM180252">
    <property type="protein sequence ID" value="CAJ54758.1"/>
    <property type="molecule type" value="Genomic_DNA"/>
</dbReference>
<dbReference type="RefSeq" id="WP_011526787.1">
    <property type="nucleotide sequence ID" value="NC_008011.1"/>
</dbReference>
<dbReference type="SMR" id="Q1MQG9"/>
<dbReference type="STRING" id="363253.LI0704"/>
<dbReference type="KEGG" id="lip:LI0704"/>
<dbReference type="eggNOG" id="COG0017">
    <property type="taxonomic scope" value="Bacteria"/>
</dbReference>
<dbReference type="HOGENOM" id="CLU_004553_2_0_7"/>
<dbReference type="OrthoDB" id="9802326at2"/>
<dbReference type="Proteomes" id="UP000002430">
    <property type="component" value="Chromosome"/>
</dbReference>
<dbReference type="GO" id="GO:0005737">
    <property type="term" value="C:cytoplasm"/>
    <property type="evidence" value="ECO:0007669"/>
    <property type="project" value="UniProtKB-SubCell"/>
</dbReference>
<dbReference type="GO" id="GO:0004816">
    <property type="term" value="F:asparagine-tRNA ligase activity"/>
    <property type="evidence" value="ECO:0007669"/>
    <property type="project" value="UniProtKB-UniRule"/>
</dbReference>
<dbReference type="GO" id="GO:0005524">
    <property type="term" value="F:ATP binding"/>
    <property type="evidence" value="ECO:0007669"/>
    <property type="project" value="UniProtKB-UniRule"/>
</dbReference>
<dbReference type="GO" id="GO:0003676">
    <property type="term" value="F:nucleic acid binding"/>
    <property type="evidence" value="ECO:0007669"/>
    <property type="project" value="InterPro"/>
</dbReference>
<dbReference type="GO" id="GO:0006421">
    <property type="term" value="P:asparaginyl-tRNA aminoacylation"/>
    <property type="evidence" value="ECO:0007669"/>
    <property type="project" value="UniProtKB-UniRule"/>
</dbReference>
<dbReference type="CDD" id="cd00776">
    <property type="entry name" value="AsxRS_core"/>
    <property type="match status" value="1"/>
</dbReference>
<dbReference type="CDD" id="cd04318">
    <property type="entry name" value="EcAsnRS_like_N"/>
    <property type="match status" value="1"/>
</dbReference>
<dbReference type="FunFam" id="3.30.930.10:FF:000016">
    <property type="entry name" value="Asparagine--tRNA ligase"/>
    <property type="match status" value="1"/>
</dbReference>
<dbReference type="Gene3D" id="3.30.930.10">
    <property type="entry name" value="Bira Bifunctional Protein, Domain 2"/>
    <property type="match status" value="1"/>
</dbReference>
<dbReference type="Gene3D" id="2.40.50.140">
    <property type="entry name" value="Nucleic acid-binding proteins"/>
    <property type="match status" value="1"/>
</dbReference>
<dbReference type="HAMAP" id="MF_00534">
    <property type="entry name" value="Asn_tRNA_synth"/>
    <property type="match status" value="1"/>
</dbReference>
<dbReference type="InterPro" id="IPR004364">
    <property type="entry name" value="Aa-tRNA-synt_II"/>
</dbReference>
<dbReference type="InterPro" id="IPR006195">
    <property type="entry name" value="aa-tRNA-synth_II"/>
</dbReference>
<dbReference type="InterPro" id="IPR045864">
    <property type="entry name" value="aa-tRNA-synth_II/BPL/LPL"/>
</dbReference>
<dbReference type="InterPro" id="IPR004522">
    <property type="entry name" value="Asn-tRNA-ligase"/>
</dbReference>
<dbReference type="InterPro" id="IPR002312">
    <property type="entry name" value="Asp/Asn-tRNA-synth_IIb"/>
</dbReference>
<dbReference type="InterPro" id="IPR012340">
    <property type="entry name" value="NA-bd_OB-fold"/>
</dbReference>
<dbReference type="InterPro" id="IPR004365">
    <property type="entry name" value="NA-bd_OB_tRNA"/>
</dbReference>
<dbReference type="NCBIfam" id="TIGR00457">
    <property type="entry name" value="asnS"/>
    <property type="match status" value="1"/>
</dbReference>
<dbReference type="NCBIfam" id="NF003037">
    <property type="entry name" value="PRK03932.1"/>
    <property type="match status" value="1"/>
</dbReference>
<dbReference type="PANTHER" id="PTHR22594:SF34">
    <property type="entry name" value="ASPARAGINE--TRNA LIGASE, MITOCHONDRIAL-RELATED"/>
    <property type="match status" value="1"/>
</dbReference>
<dbReference type="PANTHER" id="PTHR22594">
    <property type="entry name" value="ASPARTYL/LYSYL-TRNA SYNTHETASE"/>
    <property type="match status" value="1"/>
</dbReference>
<dbReference type="Pfam" id="PF00152">
    <property type="entry name" value="tRNA-synt_2"/>
    <property type="match status" value="1"/>
</dbReference>
<dbReference type="Pfam" id="PF01336">
    <property type="entry name" value="tRNA_anti-codon"/>
    <property type="match status" value="1"/>
</dbReference>
<dbReference type="PRINTS" id="PR01042">
    <property type="entry name" value="TRNASYNTHASP"/>
</dbReference>
<dbReference type="SUPFAM" id="SSF55681">
    <property type="entry name" value="Class II aaRS and biotin synthetases"/>
    <property type="match status" value="1"/>
</dbReference>
<dbReference type="SUPFAM" id="SSF50249">
    <property type="entry name" value="Nucleic acid-binding proteins"/>
    <property type="match status" value="1"/>
</dbReference>
<dbReference type="PROSITE" id="PS50862">
    <property type="entry name" value="AA_TRNA_LIGASE_II"/>
    <property type="match status" value="1"/>
</dbReference>
<reference key="1">
    <citation type="submission" date="2005-11" db="EMBL/GenBank/DDBJ databases">
        <title>The complete genome sequence of Lawsonia intracellularis: the causative agent of proliferative enteropathy.</title>
        <authorList>
            <person name="Kaur K."/>
            <person name="Zhang Q."/>
            <person name="Beckler D."/>
            <person name="Munir S."/>
            <person name="Li L."/>
            <person name="Kinsley K."/>
            <person name="Herron L."/>
            <person name="Peterson A."/>
            <person name="May B."/>
            <person name="Singh S."/>
            <person name="Gebhart C."/>
            <person name="Kapur V."/>
        </authorList>
    </citation>
    <scope>NUCLEOTIDE SEQUENCE [LARGE SCALE GENOMIC DNA]</scope>
    <source>
        <strain>PHE/MN1-00</strain>
    </source>
</reference>
<proteinExistence type="inferred from homology"/>
<gene>
    <name evidence="1" type="primary">asnS</name>
    <name type="ordered locus">LI0704</name>
</gene>
<evidence type="ECO:0000255" key="1">
    <source>
        <dbReference type="HAMAP-Rule" id="MF_00534"/>
    </source>
</evidence>
<name>SYN_LAWIP</name>
<feature type="chain" id="PRO_1000051406" description="Asparagine--tRNA ligase">
    <location>
        <begin position="1"/>
        <end position="455"/>
    </location>
</feature>
<keyword id="KW-0030">Aminoacyl-tRNA synthetase</keyword>
<keyword id="KW-0067">ATP-binding</keyword>
<keyword id="KW-0963">Cytoplasm</keyword>
<keyword id="KW-0436">Ligase</keyword>
<keyword id="KW-0547">Nucleotide-binding</keyword>
<keyword id="KW-0648">Protein biosynthesis</keyword>
<keyword id="KW-1185">Reference proteome</keyword>
<organism>
    <name type="scientific">Lawsonia intracellularis (strain PHE/MN1-00)</name>
    <dbReference type="NCBI Taxonomy" id="363253"/>
    <lineage>
        <taxon>Bacteria</taxon>
        <taxon>Pseudomonadati</taxon>
        <taxon>Thermodesulfobacteriota</taxon>
        <taxon>Desulfovibrionia</taxon>
        <taxon>Desulfovibrionales</taxon>
        <taxon>Desulfovibrionaceae</taxon>
        <taxon>Lawsonia</taxon>
    </lineage>
</organism>
<sequence>MLPSTIVEILCSKTAQADVHVGGWIRTRRNAKGFVFLELNDGSCLKNIQCIINEGSAAWDMLDGVNTGACVSVYGKLVPSPGRGQDWEIQVEKMVVHGLAAPEVFPLQKKRHSDEFLRTIAHLRVRTNKYGAIFRIRAEAAQAIHNYFYKKGFYYIHTPILTGSDCEGAGEMFRVTTAHSSNDSQSSDNFFGKECSLTVSGQLEAECLAMGLGKVYTFGPTFRAENSNTPRHAAEFWMVEPEMAFADLQDNMNLAEELTCEVIRKVLQCHIDDIMLLDKYVQPGLIKALENIIAKPFIRCSYHDAITILLSSHKDFEFPVTFGLDLQSEHEKYLTEEYFKHPVIIFDYPKEIKAFYMRQNDDEETVAAMDLLVPRIGELIGGSQREERLDNLLSRIRELGQSIEEYWWYLDLRRFGTVPHAGFGLGFERLVMLLTGVSNIRDVLPFPRTPGYLEF</sequence>